<reference key="1">
    <citation type="journal article" date="2002" name="Environ. Microbiol.">
        <title>Complete genome sequence and comparative analysis of the metabolically versatile Pseudomonas putida KT2440.</title>
        <authorList>
            <person name="Nelson K.E."/>
            <person name="Weinel C."/>
            <person name="Paulsen I.T."/>
            <person name="Dodson R.J."/>
            <person name="Hilbert H."/>
            <person name="Martins dos Santos V.A.P."/>
            <person name="Fouts D.E."/>
            <person name="Gill S.R."/>
            <person name="Pop M."/>
            <person name="Holmes M."/>
            <person name="Brinkac L.M."/>
            <person name="Beanan M.J."/>
            <person name="DeBoy R.T."/>
            <person name="Daugherty S.C."/>
            <person name="Kolonay J.F."/>
            <person name="Madupu R."/>
            <person name="Nelson W.C."/>
            <person name="White O."/>
            <person name="Peterson J.D."/>
            <person name="Khouri H.M."/>
            <person name="Hance I."/>
            <person name="Chris Lee P."/>
            <person name="Holtzapple E.K."/>
            <person name="Scanlan D."/>
            <person name="Tran K."/>
            <person name="Moazzez A."/>
            <person name="Utterback T.R."/>
            <person name="Rizzo M."/>
            <person name="Lee K."/>
            <person name="Kosack D."/>
            <person name="Moestl D."/>
            <person name="Wedler H."/>
            <person name="Lauber J."/>
            <person name="Stjepandic D."/>
            <person name="Hoheisel J."/>
            <person name="Straetz M."/>
            <person name="Heim S."/>
            <person name="Kiewitz C."/>
            <person name="Eisen J.A."/>
            <person name="Timmis K.N."/>
            <person name="Duesterhoeft A."/>
            <person name="Tuemmler B."/>
            <person name="Fraser C.M."/>
        </authorList>
    </citation>
    <scope>NUCLEOTIDE SEQUENCE [LARGE SCALE GENOMIC DNA]</scope>
    <source>
        <strain>ATCC 47054 / DSM 6125 / CFBP 8728 / NCIMB 11950 / KT2440</strain>
    </source>
</reference>
<evidence type="ECO:0000255" key="1">
    <source>
        <dbReference type="HAMAP-Rule" id="MF_00240"/>
    </source>
</evidence>
<evidence type="ECO:0000305" key="2"/>
<keyword id="KW-0143">Chaperone</keyword>
<keyword id="KW-0574">Periplasm</keyword>
<keyword id="KW-0653">Protein transport</keyword>
<keyword id="KW-1185">Reference proteome</keyword>
<keyword id="KW-0732">Signal</keyword>
<keyword id="KW-0813">Transport</keyword>
<feature type="signal peptide" evidence="1">
    <location>
        <begin position="1"/>
        <end position="21"/>
    </location>
</feature>
<feature type="chain" id="PRO_0000018270" description="Outer-membrane lipoprotein carrier protein">
    <location>
        <begin position="22"/>
        <end position="207"/>
    </location>
</feature>
<name>LOLA_PSEPK</name>
<accession>Q88FS9</accession>
<gene>
    <name evidence="1" type="primary">lolA</name>
    <name type="ordered locus">PP_4003</name>
</gene>
<proteinExistence type="inferred from homology"/>
<comment type="function">
    <text evidence="1">Participates in the translocation of lipoproteins from the inner membrane to the outer membrane. Only forms a complex with a lipoprotein if the residue after the N-terminal Cys is not an aspartate (The Asp acts as a targeting signal to indicate that the lipoprotein should stay in the inner membrane).</text>
</comment>
<comment type="subunit">
    <text evidence="1">Monomer.</text>
</comment>
<comment type="subcellular location">
    <subcellularLocation>
        <location evidence="1">Periplasm</location>
    </subcellularLocation>
</comment>
<comment type="similarity">
    <text evidence="1">Belongs to the LolA family.</text>
</comment>
<comment type="sequence caution" evidence="2">
    <conflict type="erroneous initiation">
        <sequence resource="EMBL-CDS" id="AAN69597"/>
    </conflict>
</comment>
<sequence>MRAIRMLLVSALTLGSVTAYAGEQDVQRLTQLLEKSQTIEANFSQLTLGADGTSLQETSGKMTVKRPGLFYWHTDAPQEQVVVSDGKNVTLWDPDLEQATIKKLDVRLNQTPALLLSGDVSKISQSFDIASKEQGEVMDFTLKPKTKDTLFDSLRVSFRKGLINDMQLIDSVGQRTNILFNGVKANQAVPDSKFKFDIPKGADVIKE</sequence>
<dbReference type="EMBL" id="AE015451">
    <property type="protein sequence ID" value="AAN69597.1"/>
    <property type="status" value="ALT_INIT"/>
    <property type="molecule type" value="Genomic_DNA"/>
</dbReference>
<dbReference type="RefSeq" id="NP_746133.1">
    <property type="nucleotide sequence ID" value="NC_002947.4"/>
</dbReference>
<dbReference type="RefSeq" id="WP_003251209.1">
    <property type="nucleotide sequence ID" value="NZ_CP169744.1"/>
</dbReference>
<dbReference type="SMR" id="Q88FS9"/>
<dbReference type="STRING" id="160488.PP_4003"/>
<dbReference type="PaxDb" id="160488-PP_4003"/>
<dbReference type="GeneID" id="83679294"/>
<dbReference type="KEGG" id="ppu:PP_4003"/>
<dbReference type="PATRIC" id="fig|160488.4.peg.4259"/>
<dbReference type="eggNOG" id="COG2834">
    <property type="taxonomic scope" value="Bacteria"/>
</dbReference>
<dbReference type="HOGENOM" id="CLU_087560_0_0_6"/>
<dbReference type="OrthoDB" id="9787361at2"/>
<dbReference type="PhylomeDB" id="Q88FS9"/>
<dbReference type="Proteomes" id="UP000000556">
    <property type="component" value="Chromosome"/>
</dbReference>
<dbReference type="GO" id="GO:0030288">
    <property type="term" value="C:outer membrane-bounded periplasmic space"/>
    <property type="evidence" value="ECO:0007669"/>
    <property type="project" value="TreeGrafter"/>
</dbReference>
<dbReference type="GO" id="GO:0044874">
    <property type="term" value="P:lipoprotein localization to outer membrane"/>
    <property type="evidence" value="ECO:0007669"/>
    <property type="project" value="UniProtKB-UniRule"/>
</dbReference>
<dbReference type="GO" id="GO:0042953">
    <property type="term" value="P:lipoprotein transport"/>
    <property type="evidence" value="ECO:0007669"/>
    <property type="project" value="InterPro"/>
</dbReference>
<dbReference type="CDD" id="cd16325">
    <property type="entry name" value="LolA"/>
    <property type="match status" value="1"/>
</dbReference>
<dbReference type="Gene3D" id="2.50.20.10">
    <property type="entry name" value="Lipoprotein localisation LolA/LolB/LppX"/>
    <property type="match status" value="1"/>
</dbReference>
<dbReference type="HAMAP" id="MF_00240">
    <property type="entry name" value="LolA"/>
    <property type="match status" value="1"/>
</dbReference>
<dbReference type="InterPro" id="IPR029046">
    <property type="entry name" value="LolA/LolB/LppX"/>
</dbReference>
<dbReference type="InterPro" id="IPR004564">
    <property type="entry name" value="OM_lipoprot_carrier_LolA-like"/>
</dbReference>
<dbReference type="InterPro" id="IPR018323">
    <property type="entry name" value="OM_lipoprot_carrier_LolA_Pbac"/>
</dbReference>
<dbReference type="NCBIfam" id="TIGR00547">
    <property type="entry name" value="lolA"/>
    <property type="match status" value="1"/>
</dbReference>
<dbReference type="PANTHER" id="PTHR35869">
    <property type="entry name" value="OUTER-MEMBRANE LIPOPROTEIN CARRIER PROTEIN"/>
    <property type="match status" value="1"/>
</dbReference>
<dbReference type="PANTHER" id="PTHR35869:SF1">
    <property type="entry name" value="OUTER-MEMBRANE LIPOPROTEIN CARRIER PROTEIN"/>
    <property type="match status" value="1"/>
</dbReference>
<dbReference type="Pfam" id="PF03548">
    <property type="entry name" value="LolA"/>
    <property type="match status" value="1"/>
</dbReference>
<dbReference type="SUPFAM" id="SSF89392">
    <property type="entry name" value="Prokaryotic lipoproteins and lipoprotein localization factors"/>
    <property type="match status" value="1"/>
</dbReference>
<organism>
    <name type="scientific">Pseudomonas putida (strain ATCC 47054 / DSM 6125 / CFBP 8728 / NCIMB 11950 / KT2440)</name>
    <dbReference type="NCBI Taxonomy" id="160488"/>
    <lineage>
        <taxon>Bacteria</taxon>
        <taxon>Pseudomonadati</taxon>
        <taxon>Pseudomonadota</taxon>
        <taxon>Gammaproteobacteria</taxon>
        <taxon>Pseudomonadales</taxon>
        <taxon>Pseudomonadaceae</taxon>
        <taxon>Pseudomonas</taxon>
    </lineage>
</organism>
<protein>
    <recommendedName>
        <fullName evidence="1">Outer-membrane lipoprotein carrier protein</fullName>
    </recommendedName>
</protein>